<organism>
    <name type="scientific">Bos taurus</name>
    <name type="common">Bovine</name>
    <dbReference type="NCBI Taxonomy" id="9913"/>
    <lineage>
        <taxon>Eukaryota</taxon>
        <taxon>Metazoa</taxon>
        <taxon>Chordata</taxon>
        <taxon>Craniata</taxon>
        <taxon>Vertebrata</taxon>
        <taxon>Euteleostomi</taxon>
        <taxon>Mammalia</taxon>
        <taxon>Eutheria</taxon>
        <taxon>Laurasiatheria</taxon>
        <taxon>Artiodactyla</taxon>
        <taxon>Ruminantia</taxon>
        <taxon>Pecora</taxon>
        <taxon>Bovidae</taxon>
        <taxon>Bovinae</taxon>
        <taxon>Bos</taxon>
    </lineage>
</organism>
<name>TCPG_BOVIN</name>
<accession>Q3T0K2</accession>
<proteinExistence type="evidence at protein level"/>
<evidence type="ECO:0000250" key="1"/>
<evidence type="ECO:0000250" key="2">
    <source>
        <dbReference type="UniProtKB" id="P49368"/>
    </source>
</evidence>
<evidence type="ECO:0000250" key="3">
    <source>
        <dbReference type="UniProtKB" id="P80318"/>
    </source>
</evidence>
<evidence type="ECO:0000256" key="4">
    <source>
        <dbReference type="SAM" id="MobiDB-lite"/>
    </source>
</evidence>
<evidence type="ECO:0000305" key="5"/>
<protein>
    <recommendedName>
        <fullName>T-complex protein 1 subunit gamma</fullName>
        <shortName>TCP-1-gamma</shortName>
        <ecNumber evidence="2">3.6.1.-</ecNumber>
    </recommendedName>
    <alternativeName>
        <fullName>CCT-gamma</fullName>
    </alternativeName>
</protein>
<feature type="chain" id="PRO_0000236260" description="T-complex protein 1 subunit gamma">
    <location>
        <begin position="1"/>
        <end position="545"/>
    </location>
</feature>
<feature type="region of interest" description="Disordered" evidence="4">
    <location>
        <begin position="1"/>
        <end position="24"/>
    </location>
</feature>
<feature type="region of interest" description="Disordered" evidence="4">
    <location>
        <begin position="526"/>
        <end position="545"/>
    </location>
</feature>
<feature type="binding site" evidence="2">
    <location>
        <position position="42"/>
    </location>
    <ligand>
        <name>ADP</name>
        <dbReference type="ChEBI" id="CHEBI:456216"/>
    </ligand>
</feature>
<feature type="binding site" evidence="2">
    <location>
        <position position="42"/>
    </location>
    <ligand>
        <name>ATP</name>
        <dbReference type="ChEBI" id="CHEBI:30616"/>
    </ligand>
</feature>
<feature type="binding site" evidence="2">
    <location>
        <position position="93"/>
    </location>
    <ligand>
        <name>Mg(2+)</name>
        <dbReference type="ChEBI" id="CHEBI:18420"/>
    </ligand>
</feature>
<feature type="binding site" evidence="2">
    <location>
        <position position="94"/>
    </location>
    <ligand>
        <name>ADP</name>
        <dbReference type="ChEBI" id="CHEBI:456216"/>
    </ligand>
</feature>
<feature type="binding site" evidence="2">
    <location>
        <position position="94"/>
    </location>
    <ligand>
        <name>ATP</name>
        <dbReference type="ChEBI" id="CHEBI:30616"/>
    </ligand>
</feature>
<feature type="binding site" evidence="2">
    <location>
        <position position="95"/>
    </location>
    <ligand>
        <name>ADP</name>
        <dbReference type="ChEBI" id="CHEBI:456216"/>
    </ligand>
</feature>
<feature type="binding site" evidence="2">
    <location>
        <position position="95"/>
    </location>
    <ligand>
        <name>ATP</name>
        <dbReference type="ChEBI" id="CHEBI:30616"/>
    </ligand>
</feature>
<feature type="binding site" evidence="2">
    <location>
        <position position="96"/>
    </location>
    <ligand>
        <name>ADP</name>
        <dbReference type="ChEBI" id="CHEBI:456216"/>
    </ligand>
</feature>
<feature type="binding site" evidence="2">
    <location>
        <position position="96"/>
    </location>
    <ligand>
        <name>ATP</name>
        <dbReference type="ChEBI" id="CHEBI:30616"/>
    </ligand>
</feature>
<feature type="binding site" evidence="2">
    <location>
        <position position="97"/>
    </location>
    <ligand>
        <name>ADP</name>
        <dbReference type="ChEBI" id="CHEBI:456216"/>
    </ligand>
</feature>
<feature type="binding site" evidence="2">
    <location>
        <position position="162"/>
    </location>
    <ligand>
        <name>ADP</name>
        <dbReference type="ChEBI" id="CHEBI:456216"/>
    </ligand>
</feature>
<feature type="binding site" evidence="2">
    <location>
        <position position="163"/>
    </location>
    <ligand>
        <name>ADP</name>
        <dbReference type="ChEBI" id="CHEBI:456216"/>
    </ligand>
</feature>
<feature type="binding site" evidence="2">
    <location>
        <position position="411"/>
    </location>
    <ligand>
        <name>ADP</name>
        <dbReference type="ChEBI" id="CHEBI:456216"/>
    </ligand>
</feature>
<feature type="binding site" evidence="2">
    <location>
        <position position="411"/>
    </location>
    <ligand>
        <name>ATP</name>
        <dbReference type="ChEBI" id="CHEBI:30616"/>
    </ligand>
</feature>
<feature type="binding site" evidence="2">
    <location>
        <position position="482"/>
    </location>
    <ligand>
        <name>ADP</name>
        <dbReference type="ChEBI" id="CHEBI:456216"/>
    </ligand>
</feature>
<feature type="binding site" evidence="2">
    <location>
        <position position="482"/>
    </location>
    <ligand>
        <name>ATP</name>
        <dbReference type="ChEBI" id="CHEBI:30616"/>
    </ligand>
</feature>
<feature type="binding site" evidence="2">
    <location>
        <position position="483"/>
    </location>
    <ligand>
        <name>ADP</name>
        <dbReference type="ChEBI" id="CHEBI:456216"/>
    </ligand>
</feature>
<feature type="binding site" evidence="2">
    <location>
        <position position="497"/>
    </location>
    <ligand>
        <name>ADP</name>
        <dbReference type="ChEBI" id="CHEBI:456216"/>
    </ligand>
</feature>
<feature type="binding site" evidence="2">
    <location>
        <position position="497"/>
    </location>
    <ligand>
        <name>ATP</name>
        <dbReference type="ChEBI" id="CHEBI:30616"/>
    </ligand>
</feature>
<feature type="binding site" evidence="2">
    <location>
        <position position="502"/>
    </location>
    <ligand>
        <name>ADP</name>
        <dbReference type="ChEBI" id="CHEBI:456216"/>
    </ligand>
</feature>
<feature type="modified residue" description="N-acetylmethionine" evidence="2">
    <location>
        <position position="1"/>
    </location>
</feature>
<feature type="modified residue" description="Phosphoserine" evidence="2">
    <location>
        <position position="11"/>
    </location>
</feature>
<feature type="modified residue" description="Phosphoserine" evidence="3">
    <location>
        <position position="170"/>
    </location>
</feature>
<feature type="modified residue" description="N6-acetyllysine" evidence="2">
    <location>
        <position position="222"/>
    </location>
</feature>
<feature type="modified residue" description="Phosphoserine" evidence="2">
    <location>
        <position position="243"/>
    </location>
</feature>
<feature type="modified residue" description="Phosphoserine" evidence="2">
    <location>
        <position position="244"/>
    </location>
</feature>
<feature type="modified residue" description="Phosphotyrosine" evidence="2">
    <location>
        <position position="247"/>
    </location>
</feature>
<feature type="modified residue" description="Phosphoserine" evidence="2">
    <location>
        <position position="252"/>
    </location>
</feature>
<feature type="modified residue" description="Phosphothreonine" evidence="2">
    <location>
        <position position="430"/>
    </location>
</feature>
<feature type="modified residue" description="Phosphothreonine" evidence="2">
    <location>
        <position position="459"/>
    </location>
</feature>
<feature type="disulfide bond" evidence="1">
    <location>
        <begin position="366"/>
        <end position="372"/>
    </location>
</feature>
<feature type="cross-link" description="Glycyl lysine isopeptide (Lys-Gly) (interchain with G-Cter in SUMO2)" evidence="2">
    <location>
        <position position="15"/>
    </location>
</feature>
<feature type="cross-link" description="Glycyl lysine isopeptide (Lys-Gly) (interchain with G-Cter in SUMO2)" evidence="2">
    <location>
        <position position="248"/>
    </location>
</feature>
<feature type="cross-link" description="Glycyl lysine isopeptide (Lys-Gly) (interchain with G-Cter in SUMO2)" evidence="2">
    <location>
        <position position="249"/>
    </location>
</feature>
<feature type="cross-link" description="Glycyl lysine isopeptide (Lys-Gly) (interchain with G-Cter in SUMO2)" evidence="2">
    <location>
        <position position="381"/>
    </location>
</feature>
<dbReference type="EC" id="3.6.1.-" evidence="2"/>
<dbReference type="EMBL" id="BC102360">
    <property type="protein sequence ID" value="AAI02361.1"/>
    <property type="molecule type" value="mRNA"/>
</dbReference>
<dbReference type="RefSeq" id="NP_001017934.2">
    <property type="nucleotide sequence ID" value="NM_001017934.3"/>
</dbReference>
<dbReference type="PDB" id="3IYG">
    <property type="method" value="EM"/>
    <property type="chains" value="G=13-527"/>
</dbReference>
<dbReference type="PDB" id="4B2T">
    <property type="method" value="X-ray"/>
    <property type="resolution" value="5.50 A"/>
    <property type="chains" value="G/g=1-545"/>
</dbReference>
<dbReference type="PDBsum" id="3IYG"/>
<dbReference type="PDBsum" id="4B2T"/>
<dbReference type="EMDB" id="EMD-50664"/>
<dbReference type="SMR" id="Q3T0K2"/>
<dbReference type="BioGRID" id="161384">
    <property type="interactions" value="3"/>
</dbReference>
<dbReference type="CORUM" id="Q3T0K2"/>
<dbReference type="DIP" id="DIP-58620N"/>
<dbReference type="FunCoup" id="Q3T0K2">
    <property type="interactions" value="4388"/>
</dbReference>
<dbReference type="IntAct" id="Q3T0K2">
    <property type="interactions" value="2"/>
</dbReference>
<dbReference type="STRING" id="9913.ENSBTAP00000008358"/>
<dbReference type="PaxDb" id="9913-ENSBTAP00000008358"/>
<dbReference type="PeptideAtlas" id="Q3T0K2"/>
<dbReference type="Ensembl" id="ENSBTAT00000008358.7">
    <property type="protein sequence ID" value="ENSBTAP00000008358.5"/>
    <property type="gene ID" value="ENSBTAG00000006370.7"/>
</dbReference>
<dbReference type="GeneID" id="504735"/>
<dbReference type="KEGG" id="bta:504735"/>
<dbReference type="CTD" id="7203"/>
<dbReference type="VEuPathDB" id="HostDB:ENSBTAG00000006370"/>
<dbReference type="VGNC" id="VGNC:26996">
    <property type="gene designation" value="CCT3"/>
</dbReference>
<dbReference type="eggNOG" id="KOG0364">
    <property type="taxonomic scope" value="Eukaryota"/>
</dbReference>
<dbReference type="GeneTree" id="ENSGT00570000079224"/>
<dbReference type="HOGENOM" id="CLU_008891_7_3_1"/>
<dbReference type="InParanoid" id="Q3T0K2"/>
<dbReference type="OMA" id="CGGSTIR"/>
<dbReference type="OrthoDB" id="275057at2759"/>
<dbReference type="TreeFam" id="TF105649"/>
<dbReference type="BRENDA" id="3.6.4.B10">
    <property type="organism ID" value="908"/>
</dbReference>
<dbReference type="Reactome" id="R-BTA-390471">
    <property type="pathway name" value="Association of TriC/CCT with target proteins during biosynthesis"/>
</dbReference>
<dbReference type="Reactome" id="R-BTA-6814122">
    <property type="pathway name" value="Cooperation of PDCL (PhLP1) and TRiC/CCT in G-protein beta folding"/>
</dbReference>
<dbReference type="EvolutionaryTrace" id="Q3T0K2"/>
<dbReference type="Proteomes" id="UP000009136">
    <property type="component" value="Chromosome 3"/>
</dbReference>
<dbReference type="Bgee" id="ENSBTAG00000006370">
    <property type="expression patterns" value="Expressed in diaphragm and 105 other cell types or tissues"/>
</dbReference>
<dbReference type="GO" id="GO:0044297">
    <property type="term" value="C:cell body"/>
    <property type="evidence" value="ECO:0007669"/>
    <property type="project" value="Ensembl"/>
</dbReference>
<dbReference type="GO" id="GO:0005832">
    <property type="term" value="C:chaperonin-containing T-complex"/>
    <property type="evidence" value="ECO:0000314"/>
    <property type="project" value="UniProtKB"/>
</dbReference>
<dbReference type="GO" id="GO:0005874">
    <property type="term" value="C:microtubule"/>
    <property type="evidence" value="ECO:0007669"/>
    <property type="project" value="Ensembl"/>
</dbReference>
<dbReference type="GO" id="GO:0002199">
    <property type="term" value="C:zona pellucida receptor complex"/>
    <property type="evidence" value="ECO:0007669"/>
    <property type="project" value="Ensembl"/>
</dbReference>
<dbReference type="GO" id="GO:0005524">
    <property type="term" value="F:ATP binding"/>
    <property type="evidence" value="ECO:0007669"/>
    <property type="project" value="UniProtKB-KW"/>
</dbReference>
<dbReference type="GO" id="GO:0016887">
    <property type="term" value="F:ATP hydrolysis activity"/>
    <property type="evidence" value="ECO:0007669"/>
    <property type="project" value="InterPro"/>
</dbReference>
<dbReference type="GO" id="GO:0140662">
    <property type="term" value="F:ATP-dependent protein folding chaperone"/>
    <property type="evidence" value="ECO:0007669"/>
    <property type="project" value="InterPro"/>
</dbReference>
<dbReference type="GO" id="GO:0051082">
    <property type="term" value="F:unfolded protein binding"/>
    <property type="evidence" value="ECO:0000318"/>
    <property type="project" value="GO_Central"/>
</dbReference>
<dbReference type="GO" id="GO:0007339">
    <property type="term" value="P:binding of sperm to zona pellucida"/>
    <property type="evidence" value="ECO:0007669"/>
    <property type="project" value="Ensembl"/>
</dbReference>
<dbReference type="GO" id="GO:0051086">
    <property type="term" value="P:chaperone mediated protein folding independent of cofactor"/>
    <property type="evidence" value="ECO:0007669"/>
    <property type="project" value="Ensembl"/>
</dbReference>
<dbReference type="GO" id="GO:0032212">
    <property type="term" value="P:positive regulation of telomere maintenance via telomerase"/>
    <property type="evidence" value="ECO:0007669"/>
    <property type="project" value="Ensembl"/>
</dbReference>
<dbReference type="GO" id="GO:0006457">
    <property type="term" value="P:protein folding"/>
    <property type="evidence" value="ECO:0000318"/>
    <property type="project" value="GO_Central"/>
</dbReference>
<dbReference type="GO" id="GO:0050821">
    <property type="term" value="P:protein stabilization"/>
    <property type="evidence" value="ECO:0007669"/>
    <property type="project" value="Ensembl"/>
</dbReference>
<dbReference type="CDD" id="cd03337">
    <property type="entry name" value="TCP1_gamma"/>
    <property type="match status" value="1"/>
</dbReference>
<dbReference type="FunFam" id="1.10.560.10:FF:000069">
    <property type="entry name" value="T-complex protein 1 subunit gamma"/>
    <property type="match status" value="1"/>
</dbReference>
<dbReference type="FunFam" id="1.10.560.10:FF:000076">
    <property type="entry name" value="T-complex protein 1 subunit gamma"/>
    <property type="match status" value="1"/>
</dbReference>
<dbReference type="FunFam" id="3.50.7.10:FF:000005">
    <property type="entry name" value="T-complex protein 1 subunit gamma"/>
    <property type="match status" value="1"/>
</dbReference>
<dbReference type="Gene3D" id="3.50.7.10">
    <property type="entry name" value="GroEL"/>
    <property type="match status" value="1"/>
</dbReference>
<dbReference type="Gene3D" id="1.10.560.10">
    <property type="entry name" value="GroEL-like equatorial domain"/>
    <property type="match status" value="1"/>
</dbReference>
<dbReference type="Gene3D" id="3.30.260.10">
    <property type="entry name" value="TCP-1-like chaperonin intermediate domain"/>
    <property type="match status" value="1"/>
</dbReference>
<dbReference type="InterPro" id="IPR012719">
    <property type="entry name" value="Chap_CCT_gamma"/>
</dbReference>
<dbReference type="InterPro" id="IPR017998">
    <property type="entry name" value="Chaperone_TCP-1"/>
</dbReference>
<dbReference type="InterPro" id="IPR002194">
    <property type="entry name" value="Chaperonin_TCP-1_CS"/>
</dbReference>
<dbReference type="InterPro" id="IPR002423">
    <property type="entry name" value="Cpn60/GroEL/TCP-1"/>
</dbReference>
<dbReference type="InterPro" id="IPR027409">
    <property type="entry name" value="GroEL-like_apical_dom_sf"/>
</dbReference>
<dbReference type="InterPro" id="IPR027413">
    <property type="entry name" value="GROEL-like_equatorial_sf"/>
</dbReference>
<dbReference type="InterPro" id="IPR027410">
    <property type="entry name" value="TCP-1-like_intermed_sf"/>
</dbReference>
<dbReference type="InterPro" id="IPR053374">
    <property type="entry name" value="TCP-1_chaperonin"/>
</dbReference>
<dbReference type="InterPro" id="IPR054827">
    <property type="entry name" value="thermosome_alpha"/>
</dbReference>
<dbReference type="NCBIfam" id="TIGR02344">
    <property type="entry name" value="chap_CCT_gamma"/>
    <property type="match status" value="1"/>
</dbReference>
<dbReference type="NCBIfam" id="NF041082">
    <property type="entry name" value="thermosome_alpha"/>
    <property type="match status" value="1"/>
</dbReference>
<dbReference type="NCBIfam" id="NF041083">
    <property type="entry name" value="thermosome_beta"/>
    <property type="match status" value="1"/>
</dbReference>
<dbReference type="PANTHER" id="PTHR11353">
    <property type="entry name" value="CHAPERONIN"/>
    <property type="match status" value="1"/>
</dbReference>
<dbReference type="Pfam" id="PF00118">
    <property type="entry name" value="Cpn60_TCP1"/>
    <property type="match status" value="1"/>
</dbReference>
<dbReference type="PRINTS" id="PR00304">
    <property type="entry name" value="TCOMPLEXTCP1"/>
</dbReference>
<dbReference type="SUPFAM" id="SSF52029">
    <property type="entry name" value="GroEL apical domain-like"/>
    <property type="match status" value="1"/>
</dbReference>
<dbReference type="SUPFAM" id="SSF48592">
    <property type="entry name" value="GroEL equatorial domain-like"/>
    <property type="match status" value="1"/>
</dbReference>
<dbReference type="SUPFAM" id="SSF54849">
    <property type="entry name" value="GroEL-intermediate domain like"/>
    <property type="match status" value="1"/>
</dbReference>
<dbReference type="PROSITE" id="PS00750">
    <property type="entry name" value="TCP1_1"/>
    <property type="match status" value="1"/>
</dbReference>
<dbReference type="PROSITE" id="PS00751">
    <property type="entry name" value="TCP1_2"/>
    <property type="match status" value="1"/>
</dbReference>
<dbReference type="PROSITE" id="PS00995">
    <property type="entry name" value="TCP1_3"/>
    <property type="match status" value="1"/>
</dbReference>
<keyword id="KW-0002">3D-structure</keyword>
<keyword id="KW-0007">Acetylation</keyword>
<keyword id="KW-0067">ATP-binding</keyword>
<keyword id="KW-0143">Chaperone</keyword>
<keyword id="KW-0963">Cytoplasm</keyword>
<keyword id="KW-1015">Disulfide bond</keyword>
<keyword id="KW-0378">Hydrolase</keyword>
<keyword id="KW-1017">Isopeptide bond</keyword>
<keyword id="KW-0460">Magnesium</keyword>
<keyword id="KW-0479">Metal-binding</keyword>
<keyword id="KW-0547">Nucleotide-binding</keyword>
<keyword id="KW-0597">Phosphoprotein</keyword>
<keyword id="KW-1185">Reference proteome</keyword>
<keyword id="KW-0832">Ubl conjugation</keyword>
<gene>
    <name type="primary">CCT3</name>
</gene>
<comment type="function">
    <text evidence="2">Component of the chaperonin-containing T-complex (TRiC), a molecular chaperone complex that assists the folding of actin, tubulin and other proteins upon ATP hydrolysis. The TRiC complex mediates the folding of WRAP53/TCAB1, thereby regulating telomere maintenance. As part of the TRiC complex may play a role in the assembly of BBSome, a complex involved in ciliogenesis regulating transports vesicles to the cilia.</text>
</comment>
<comment type="catalytic activity">
    <reaction evidence="2">
        <text>ATP + H2O = ADP + phosphate + H(+)</text>
        <dbReference type="Rhea" id="RHEA:13065"/>
        <dbReference type="ChEBI" id="CHEBI:15377"/>
        <dbReference type="ChEBI" id="CHEBI:15378"/>
        <dbReference type="ChEBI" id="CHEBI:30616"/>
        <dbReference type="ChEBI" id="CHEBI:43474"/>
        <dbReference type="ChEBI" id="CHEBI:456216"/>
    </reaction>
</comment>
<comment type="subunit">
    <text evidence="2 3">Component of the chaperonin-containing T-complex (TRiC), a hexadecamer composed of two identical back-to-back stacked rings enclosing a protein folding chamber. Each ring is made up of eight different subunits: TCP1/CCT1, CCT2, CCT3, CCT4, CCT5, CCT6A/CCT6, CCT7, CCT8. Interacts with PACRG (By similarity). Interacts with DNAAF4 (By similarity). Interacts with DLEC1 (By similarity).</text>
</comment>
<comment type="subcellular location">
    <subcellularLocation>
        <location evidence="5">Cytoplasm</location>
    </subcellularLocation>
</comment>
<comment type="similarity">
    <text evidence="5">Belongs to the TCP-1 chaperonin family.</text>
</comment>
<reference key="1">
    <citation type="submission" date="2005-08" db="EMBL/GenBank/DDBJ databases">
        <authorList>
            <consortium name="NIH - Mammalian Gene Collection (MGC) project"/>
        </authorList>
    </citation>
    <scope>NUCLEOTIDE SEQUENCE [LARGE SCALE MRNA]</scope>
    <source>
        <strain>Crossbred X Angus</strain>
        <tissue>Ileum</tissue>
    </source>
</reference>
<sequence length="545" mass="60586">MMGHRPVLVLSQNTKRESGRKVQSGNINAAKTIADIIRTCLGPKSMMKMLLDPMGGIVMTNDGNAILREIQVQHPAAKSMIEISRTQDEEVGDGTTSVIILAGEMLSVAEHFLEQQMHPTVVISAYRKALDDMISTLKKISIPVDTSNRDTMLNIINSSITTKVISRWSSLACNIALDAVKTVQFEENGRKEIDIKKYARVEKIPGGIIEDSCVLRGVMINKDVTHPRMRRYIKNPRIVLLDSSLEYKKGESQTDIEITREEDFTRILQMEEEYIQQLCEDIIQLKPDVVITEKGISDLAQHYLMRANITAIRRVRKTDNNRIARACGARIVSRPEELREEDVGTGAGLLEIKKIGDEYFTFITECKDPKACTILLRGASKEILSEVERNLQDAMQVCRNVLLDPQLVPGGGASEMAVAHALTEKSKAMTGVEQWPYRAVAQALEVIPRTLIQNCGASTIRLLTSLRAKHTQENCETWGVNGETGTLVDMKELGIWEPLAVKLQTYKTAVETAVLLLRIDDIVSGHKKKGDDQSRQGGAPDAGQE</sequence>